<keyword id="KW-0249">Electron transport</keyword>
<keyword id="KW-0349">Heme</keyword>
<keyword id="KW-0408">Iron</keyword>
<keyword id="KW-0472">Membrane</keyword>
<keyword id="KW-0479">Metal-binding</keyword>
<keyword id="KW-0496">Mitochondrion</keyword>
<keyword id="KW-0999">Mitochondrion inner membrane</keyword>
<keyword id="KW-0679">Respiratory chain</keyword>
<keyword id="KW-0812">Transmembrane</keyword>
<keyword id="KW-1133">Transmembrane helix</keyword>
<keyword id="KW-0813">Transport</keyword>
<keyword id="KW-0830">Ubiquinone</keyword>
<dbReference type="EMBL" id="AF258872">
    <property type="protein sequence ID" value="AAL74308.1"/>
    <property type="molecule type" value="Genomic_DNA"/>
</dbReference>
<dbReference type="SMR" id="Q8SJK8"/>
<dbReference type="GO" id="GO:0005743">
    <property type="term" value="C:mitochondrial inner membrane"/>
    <property type="evidence" value="ECO:0007669"/>
    <property type="project" value="UniProtKB-SubCell"/>
</dbReference>
<dbReference type="GO" id="GO:0045275">
    <property type="term" value="C:respiratory chain complex III"/>
    <property type="evidence" value="ECO:0007669"/>
    <property type="project" value="InterPro"/>
</dbReference>
<dbReference type="GO" id="GO:0046872">
    <property type="term" value="F:metal ion binding"/>
    <property type="evidence" value="ECO:0007669"/>
    <property type="project" value="UniProtKB-KW"/>
</dbReference>
<dbReference type="GO" id="GO:0008121">
    <property type="term" value="F:ubiquinol-cytochrome-c reductase activity"/>
    <property type="evidence" value="ECO:0007669"/>
    <property type="project" value="InterPro"/>
</dbReference>
<dbReference type="GO" id="GO:0006122">
    <property type="term" value="P:mitochondrial electron transport, ubiquinol to cytochrome c"/>
    <property type="evidence" value="ECO:0007669"/>
    <property type="project" value="TreeGrafter"/>
</dbReference>
<dbReference type="CDD" id="cd00290">
    <property type="entry name" value="cytochrome_b_C"/>
    <property type="match status" value="1"/>
</dbReference>
<dbReference type="CDD" id="cd00284">
    <property type="entry name" value="Cytochrome_b_N"/>
    <property type="match status" value="1"/>
</dbReference>
<dbReference type="FunFam" id="1.20.810.10:FF:000002">
    <property type="entry name" value="Cytochrome b"/>
    <property type="match status" value="1"/>
</dbReference>
<dbReference type="Gene3D" id="1.20.810.10">
    <property type="entry name" value="Cytochrome Bc1 Complex, Chain C"/>
    <property type="match status" value="1"/>
</dbReference>
<dbReference type="InterPro" id="IPR005798">
    <property type="entry name" value="Cyt_b/b6_C"/>
</dbReference>
<dbReference type="InterPro" id="IPR036150">
    <property type="entry name" value="Cyt_b/b6_C_sf"/>
</dbReference>
<dbReference type="InterPro" id="IPR005797">
    <property type="entry name" value="Cyt_b/b6_N"/>
</dbReference>
<dbReference type="InterPro" id="IPR027387">
    <property type="entry name" value="Cytb/b6-like_sf"/>
</dbReference>
<dbReference type="InterPro" id="IPR030689">
    <property type="entry name" value="Cytochrome_b"/>
</dbReference>
<dbReference type="InterPro" id="IPR048260">
    <property type="entry name" value="Cytochrome_b_C_euk/bac"/>
</dbReference>
<dbReference type="InterPro" id="IPR048259">
    <property type="entry name" value="Cytochrome_b_N_euk/bac"/>
</dbReference>
<dbReference type="InterPro" id="IPR016174">
    <property type="entry name" value="Di-haem_cyt_TM"/>
</dbReference>
<dbReference type="PANTHER" id="PTHR19271">
    <property type="entry name" value="CYTOCHROME B"/>
    <property type="match status" value="1"/>
</dbReference>
<dbReference type="PANTHER" id="PTHR19271:SF16">
    <property type="entry name" value="CYTOCHROME B"/>
    <property type="match status" value="1"/>
</dbReference>
<dbReference type="Pfam" id="PF00032">
    <property type="entry name" value="Cytochrom_B_C"/>
    <property type="match status" value="1"/>
</dbReference>
<dbReference type="Pfam" id="PF00033">
    <property type="entry name" value="Cytochrome_B"/>
    <property type="match status" value="1"/>
</dbReference>
<dbReference type="PIRSF" id="PIRSF038885">
    <property type="entry name" value="COB"/>
    <property type="match status" value="1"/>
</dbReference>
<dbReference type="SUPFAM" id="SSF81648">
    <property type="entry name" value="a domain/subunit of cytochrome bc1 complex (Ubiquinol-cytochrome c reductase)"/>
    <property type="match status" value="1"/>
</dbReference>
<dbReference type="SUPFAM" id="SSF81342">
    <property type="entry name" value="Transmembrane di-heme cytochromes"/>
    <property type="match status" value="1"/>
</dbReference>
<dbReference type="PROSITE" id="PS51003">
    <property type="entry name" value="CYTB_CTER"/>
    <property type="match status" value="1"/>
</dbReference>
<dbReference type="PROSITE" id="PS51002">
    <property type="entry name" value="CYTB_NTER"/>
    <property type="match status" value="1"/>
</dbReference>
<protein>
    <recommendedName>
        <fullName>Cytochrome b</fullName>
    </recommendedName>
    <alternativeName>
        <fullName>Complex III subunit 3</fullName>
    </alternativeName>
    <alternativeName>
        <fullName>Complex III subunit III</fullName>
    </alternativeName>
    <alternativeName>
        <fullName>Cytochrome b-c1 complex subunit 3</fullName>
    </alternativeName>
    <alternativeName>
        <fullName>Ubiquinol-cytochrome-c reductase complex cytochrome b subunit</fullName>
    </alternativeName>
</protein>
<feature type="chain" id="PRO_0000061651" description="Cytochrome b">
    <location>
        <begin position="1"/>
        <end position="379"/>
    </location>
</feature>
<feature type="transmembrane region" description="Helical" evidence="2">
    <location>
        <begin position="34"/>
        <end position="54"/>
    </location>
</feature>
<feature type="transmembrane region" description="Helical" evidence="2">
    <location>
        <begin position="78"/>
        <end position="99"/>
    </location>
</feature>
<feature type="transmembrane region" description="Helical" evidence="2">
    <location>
        <begin position="114"/>
        <end position="134"/>
    </location>
</feature>
<feature type="transmembrane region" description="Helical" evidence="2">
    <location>
        <begin position="179"/>
        <end position="199"/>
    </location>
</feature>
<feature type="transmembrane region" description="Helical" evidence="2">
    <location>
        <begin position="227"/>
        <end position="247"/>
    </location>
</feature>
<feature type="transmembrane region" description="Helical" evidence="2">
    <location>
        <begin position="289"/>
        <end position="309"/>
    </location>
</feature>
<feature type="transmembrane region" description="Helical" evidence="2">
    <location>
        <begin position="321"/>
        <end position="341"/>
    </location>
</feature>
<feature type="transmembrane region" description="Helical" evidence="2">
    <location>
        <begin position="348"/>
        <end position="368"/>
    </location>
</feature>
<feature type="binding site" description="axial binding residue" evidence="2">
    <location>
        <position position="84"/>
    </location>
    <ligand>
        <name>heme b</name>
        <dbReference type="ChEBI" id="CHEBI:60344"/>
        <label>b562</label>
    </ligand>
    <ligandPart>
        <name>Fe</name>
        <dbReference type="ChEBI" id="CHEBI:18248"/>
    </ligandPart>
</feature>
<feature type="binding site" description="axial binding residue" evidence="2">
    <location>
        <position position="98"/>
    </location>
    <ligand>
        <name>heme b</name>
        <dbReference type="ChEBI" id="CHEBI:60344"/>
        <label>b566</label>
    </ligand>
    <ligandPart>
        <name>Fe</name>
        <dbReference type="ChEBI" id="CHEBI:18248"/>
    </ligandPart>
</feature>
<feature type="binding site" description="axial binding residue" evidence="2">
    <location>
        <position position="183"/>
    </location>
    <ligand>
        <name>heme b</name>
        <dbReference type="ChEBI" id="CHEBI:60344"/>
        <label>b562</label>
    </ligand>
    <ligandPart>
        <name>Fe</name>
        <dbReference type="ChEBI" id="CHEBI:18248"/>
    </ligandPart>
</feature>
<feature type="binding site" description="axial binding residue" evidence="2">
    <location>
        <position position="197"/>
    </location>
    <ligand>
        <name>heme b</name>
        <dbReference type="ChEBI" id="CHEBI:60344"/>
        <label>b566</label>
    </ligand>
    <ligandPart>
        <name>Fe</name>
        <dbReference type="ChEBI" id="CHEBI:18248"/>
    </ligandPart>
</feature>
<feature type="binding site" evidence="2">
    <location>
        <position position="202"/>
    </location>
    <ligand>
        <name>a ubiquinone</name>
        <dbReference type="ChEBI" id="CHEBI:16389"/>
    </ligand>
</feature>
<accession>Q8SJK8</accession>
<geneLocation type="mitochondrion"/>
<organism>
    <name type="scientific">Terrapene coahuila</name>
    <name type="common">Coahuila box turtle</name>
    <dbReference type="NCBI Taxonomy" id="158815"/>
    <lineage>
        <taxon>Eukaryota</taxon>
        <taxon>Metazoa</taxon>
        <taxon>Chordata</taxon>
        <taxon>Craniata</taxon>
        <taxon>Vertebrata</taxon>
        <taxon>Euteleostomi</taxon>
        <taxon>Archelosauria</taxon>
        <taxon>Testudinata</taxon>
        <taxon>Testudines</taxon>
        <taxon>Cryptodira</taxon>
        <taxon>Durocryptodira</taxon>
        <taxon>Testudinoidea</taxon>
        <taxon>Emydidae</taxon>
        <taxon>Terrapene</taxon>
    </lineage>
</organism>
<reference key="1">
    <citation type="journal article" date="2002" name="Mol. Phylogenet. Evol.">
        <title>Molecular phylogenetics of emydine turtles: taxonomic revision and the evolution of shell kinesis.</title>
        <authorList>
            <person name="Feldman C.R."/>
            <person name="Parham J.F."/>
        </authorList>
    </citation>
    <scope>NUCLEOTIDE SEQUENCE [GENOMIC DNA]</scope>
    <source>
        <strain>Isolate T00228</strain>
    </source>
</reference>
<sequence>MSTNLRKTHPLAKIINNSFIDLPSPSNISAWWNFGSLLGTCLILQTITGIFLAMHYSPDISLAFSSVAHITRDVQYGWLIRNMHANGASLFFMCIYLHIGRGIYYGSYLYKETWNTGTTLLLLTMATAFVGYVLPWGQMSFWGATVITNLLSAIPYVGNTLVQWIWGGFSVDNATLTRFFTFHFLLPFTIMGLTMMHLLFLHETGSNNPTGLNSNTDKIPFHPYFSYKDLLGLILMLAFLLTLALFFPNLLGDPDNFTPANPLSTPPHIKPEWYFLFAYAILRSIPNKLGGVLALLMSILVLFLMPALHTSKQRTTQFRPLTQILFWSLIANLLVLTWIGGQPVENPFIIIGQMASILYFSILLILMPIAGMIENKMLT</sequence>
<proteinExistence type="inferred from homology"/>
<comment type="function">
    <text evidence="2">Component of the ubiquinol-cytochrome c reductase complex (complex III or cytochrome b-c1 complex) that is part of the mitochondrial respiratory chain. The b-c1 complex mediates electron transfer from ubiquinol to cytochrome c. Contributes to the generation of a proton gradient across the mitochondrial membrane that is then used for ATP synthesis.</text>
</comment>
<comment type="cofactor">
    <cofactor evidence="2">
        <name>heme b</name>
        <dbReference type="ChEBI" id="CHEBI:60344"/>
    </cofactor>
    <text evidence="2">Binds 2 heme b groups non-covalently.</text>
</comment>
<comment type="subunit">
    <text evidence="2">The cytochrome bc1 complex contains 3 respiratory subunits (MT-CYB, CYC1 and UQCRFS1), 2 core proteins (UQCRC1 and UQCRC2) and probably 6 low-molecular weight proteins.</text>
</comment>
<comment type="subcellular location">
    <subcellularLocation>
        <location evidence="2">Mitochondrion inner membrane</location>
        <topology evidence="2">Multi-pass membrane protein</topology>
    </subcellularLocation>
</comment>
<comment type="miscellaneous">
    <text evidence="1">Heme 1 (or BL or b562) is low-potential and absorbs at about 562 nm, and heme 2 (or BH or b566) is high-potential and absorbs at about 566 nm.</text>
</comment>
<comment type="similarity">
    <text evidence="3 4">Belongs to the cytochrome b family.</text>
</comment>
<comment type="caution">
    <text evidence="2">The full-length protein contains only eight transmembrane helices, not nine as predicted by bioinformatics tools.</text>
</comment>
<evidence type="ECO:0000250" key="1"/>
<evidence type="ECO:0000250" key="2">
    <source>
        <dbReference type="UniProtKB" id="P00157"/>
    </source>
</evidence>
<evidence type="ECO:0000255" key="3">
    <source>
        <dbReference type="PROSITE-ProRule" id="PRU00967"/>
    </source>
</evidence>
<evidence type="ECO:0000255" key="4">
    <source>
        <dbReference type="PROSITE-ProRule" id="PRU00968"/>
    </source>
</evidence>
<gene>
    <name type="primary">MT-CYB</name>
    <name type="synonym">COB</name>
    <name type="synonym">CYTB</name>
    <name type="synonym">MTCYB</name>
</gene>
<name>CYB_TERCO</name>